<accession>P0CD13</accession>
<accession>B0Z588</accession>
<geneLocation type="chloroplast"/>
<reference key="1">
    <citation type="journal article" date="2008" name="Nucleic Acids Res.">
        <title>The complete nucleotide sequences of the five genetically distinct plastid genomes of Oenothera, subsection Oenothera: I. Sequence evaluation and plastome evolution.</title>
        <authorList>
            <person name="Greiner S."/>
            <person name="Wang X."/>
            <person name="Rauwolf U."/>
            <person name="Silber M.V."/>
            <person name="Mayer K."/>
            <person name="Meurer J."/>
            <person name="Haberer G."/>
            <person name="Herrmann R.G."/>
        </authorList>
    </citation>
    <scope>NUCLEOTIDE SEQUENCE [LARGE SCALE GENOMIC DNA]</scope>
    <source>
        <strain>cv. Rr-lamarckiana Sweden</strain>
    </source>
</reference>
<proteinExistence type="inferred from homology"/>
<gene>
    <name evidence="1" type="primary">ndhB2</name>
</gene>
<evidence type="ECO:0000255" key="1">
    <source>
        <dbReference type="HAMAP-Rule" id="MF_00445"/>
    </source>
</evidence>
<feature type="chain" id="PRO_0000391294" description="NAD(P)H-quinone oxidoreductase subunit 2 B, chloroplastic">
    <location>
        <begin position="1"/>
        <end position="510"/>
    </location>
</feature>
<feature type="transmembrane region" description="Helical" evidence="1">
    <location>
        <begin position="26"/>
        <end position="46"/>
    </location>
</feature>
<feature type="transmembrane region" description="Helical" evidence="1">
    <location>
        <begin position="57"/>
        <end position="77"/>
    </location>
</feature>
<feature type="transmembrane region" description="Helical" evidence="1">
    <location>
        <begin position="99"/>
        <end position="119"/>
    </location>
</feature>
<feature type="transmembrane region" description="Helical" evidence="1">
    <location>
        <begin position="124"/>
        <end position="144"/>
    </location>
</feature>
<feature type="transmembrane region" description="Helical" evidence="1">
    <location>
        <begin position="149"/>
        <end position="169"/>
    </location>
</feature>
<feature type="transmembrane region" description="Helical" evidence="1">
    <location>
        <begin position="183"/>
        <end position="203"/>
    </location>
</feature>
<feature type="transmembrane region" description="Helical" evidence="1">
    <location>
        <begin position="227"/>
        <end position="247"/>
    </location>
</feature>
<feature type="transmembrane region" description="Helical" evidence="1">
    <location>
        <begin position="295"/>
        <end position="315"/>
    </location>
</feature>
<feature type="transmembrane region" description="Helical" evidence="1">
    <location>
        <begin position="323"/>
        <end position="342"/>
    </location>
</feature>
<feature type="transmembrane region" description="Helical" evidence="1">
    <location>
        <begin position="354"/>
        <end position="374"/>
    </location>
</feature>
<feature type="transmembrane region" description="Helical" evidence="1">
    <location>
        <begin position="395"/>
        <end position="415"/>
    </location>
</feature>
<feature type="transmembrane region" description="Helical" evidence="1">
    <location>
        <begin position="418"/>
        <end position="438"/>
    </location>
</feature>
<feature type="transmembrane region" description="Helical" evidence="1">
    <location>
        <begin position="484"/>
        <end position="504"/>
    </location>
</feature>
<organism>
    <name type="scientific">Oenothera glazioviana</name>
    <name type="common">Large-flowered evening primrose</name>
    <name type="synonym">Oenothera erythrosepala</name>
    <dbReference type="NCBI Taxonomy" id="482428"/>
    <lineage>
        <taxon>Eukaryota</taxon>
        <taxon>Viridiplantae</taxon>
        <taxon>Streptophyta</taxon>
        <taxon>Embryophyta</taxon>
        <taxon>Tracheophyta</taxon>
        <taxon>Spermatophyta</taxon>
        <taxon>Magnoliopsida</taxon>
        <taxon>eudicotyledons</taxon>
        <taxon>Gunneridae</taxon>
        <taxon>Pentapetalae</taxon>
        <taxon>rosids</taxon>
        <taxon>malvids</taxon>
        <taxon>Myrtales</taxon>
        <taxon>Onagraceae</taxon>
        <taxon>Onagroideae</taxon>
        <taxon>Onagreae</taxon>
        <taxon>Oenothera</taxon>
    </lineage>
</organism>
<comment type="function">
    <text evidence="1">NDH shuttles electrons from NAD(P)H:plastoquinone, via FMN and iron-sulfur (Fe-S) centers, to quinones in the photosynthetic chain and possibly in a chloroplast respiratory chain. The immediate electron acceptor for the enzyme in this species is believed to be plastoquinone. Couples the redox reaction to proton translocation, and thus conserves the redox energy in a proton gradient.</text>
</comment>
<comment type="catalytic activity">
    <reaction evidence="1">
        <text>a plastoquinone + NADH + (n+1) H(+)(in) = a plastoquinol + NAD(+) + n H(+)(out)</text>
        <dbReference type="Rhea" id="RHEA:42608"/>
        <dbReference type="Rhea" id="RHEA-COMP:9561"/>
        <dbReference type="Rhea" id="RHEA-COMP:9562"/>
        <dbReference type="ChEBI" id="CHEBI:15378"/>
        <dbReference type="ChEBI" id="CHEBI:17757"/>
        <dbReference type="ChEBI" id="CHEBI:57540"/>
        <dbReference type="ChEBI" id="CHEBI:57945"/>
        <dbReference type="ChEBI" id="CHEBI:62192"/>
    </reaction>
</comment>
<comment type="catalytic activity">
    <reaction evidence="1">
        <text>a plastoquinone + NADPH + (n+1) H(+)(in) = a plastoquinol + NADP(+) + n H(+)(out)</text>
        <dbReference type="Rhea" id="RHEA:42612"/>
        <dbReference type="Rhea" id="RHEA-COMP:9561"/>
        <dbReference type="Rhea" id="RHEA-COMP:9562"/>
        <dbReference type="ChEBI" id="CHEBI:15378"/>
        <dbReference type="ChEBI" id="CHEBI:17757"/>
        <dbReference type="ChEBI" id="CHEBI:57783"/>
        <dbReference type="ChEBI" id="CHEBI:58349"/>
        <dbReference type="ChEBI" id="CHEBI:62192"/>
    </reaction>
</comment>
<comment type="subunit">
    <text evidence="1">NDH is composed of at least 16 different subunits, 5 of which are encoded in the nucleus.</text>
</comment>
<comment type="subcellular location">
    <subcellularLocation>
        <location evidence="1">Plastid</location>
        <location evidence="1">Chloroplast thylakoid membrane</location>
        <topology evidence="1">Multi-pass membrane protein</topology>
    </subcellularLocation>
</comment>
<comment type="similarity">
    <text evidence="1">Belongs to the complex I subunit 2 family.</text>
</comment>
<dbReference type="EC" id="7.1.1.-" evidence="1"/>
<dbReference type="EMBL" id="EU262890">
    <property type="protein sequence ID" value="ABX10096.1"/>
    <property type="molecule type" value="Genomic_DNA"/>
</dbReference>
<dbReference type="SMR" id="P0CD13"/>
<dbReference type="GO" id="GO:0009535">
    <property type="term" value="C:chloroplast thylakoid membrane"/>
    <property type="evidence" value="ECO:0007669"/>
    <property type="project" value="UniProtKB-SubCell"/>
</dbReference>
<dbReference type="GO" id="GO:0008137">
    <property type="term" value="F:NADH dehydrogenase (ubiquinone) activity"/>
    <property type="evidence" value="ECO:0007669"/>
    <property type="project" value="InterPro"/>
</dbReference>
<dbReference type="GO" id="GO:0048038">
    <property type="term" value="F:quinone binding"/>
    <property type="evidence" value="ECO:0007669"/>
    <property type="project" value="UniProtKB-KW"/>
</dbReference>
<dbReference type="GO" id="GO:0042773">
    <property type="term" value="P:ATP synthesis coupled electron transport"/>
    <property type="evidence" value="ECO:0007669"/>
    <property type="project" value="InterPro"/>
</dbReference>
<dbReference type="GO" id="GO:0019684">
    <property type="term" value="P:photosynthesis, light reaction"/>
    <property type="evidence" value="ECO:0007669"/>
    <property type="project" value="UniProtKB-UniRule"/>
</dbReference>
<dbReference type="HAMAP" id="MF_00445">
    <property type="entry name" value="NDH1_NuoN_1"/>
    <property type="match status" value="1"/>
</dbReference>
<dbReference type="InterPro" id="IPR010096">
    <property type="entry name" value="NADH-Q_OxRdtase_suN/2"/>
</dbReference>
<dbReference type="InterPro" id="IPR001750">
    <property type="entry name" value="ND/Mrp_TM"/>
</dbReference>
<dbReference type="InterPro" id="IPR045693">
    <property type="entry name" value="Ndh2_N"/>
</dbReference>
<dbReference type="NCBIfam" id="TIGR01770">
    <property type="entry name" value="NDH_I_N"/>
    <property type="match status" value="1"/>
</dbReference>
<dbReference type="NCBIfam" id="NF002701">
    <property type="entry name" value="PRK02504.1"/>
    <property type="match status" value="1"/>
</dbReference>
<dbReference type="PANTHER" id="PTHR22773">
    <property type="entry name" value="NADH DEHYDROGENASE"/>
    <property type="match status" value="1"/>
</dbReference>
<dbReference type="Pfam" id="PF19530">
    <property type="entry name" value="Ndh2_N"/>
    <property type="match status" value="1"/>
</dbReference>
<dbReference type="Pfam" id="PF00361">
    <property type="entry name" value="Proton_antipo_M"/>
    <property type="match status" value="1"/>
</dbReference>
<sequence>MIWHVQNENLILDSTRIFMKAFHLPLFDGSFIFPEGILIFGLILLLMIDSTSDQTDIPWFYFISSISLVMSITALLFRWREEPRILFSGNFQTNNFNEIFQFLILLCSTLCIPLSVEYIECTEMAITEFLLFVLTATLGGMFLCGANDLITIFVAPECFSLCSYLLSGYTKKDVRSNEATMKYLLMGGASSSILVHGFSWLYGSSGGEIELQEIVNGLINTQMYNSPGISIALIFITVGIGFKLSPAPSHQWTPDVYEGSPTPVVAFLSVTSKVAASASATRIFDIPFYFSSNEWHPLLEILAILSMILGNLIAITQTSMKRMLAYSSIGQIGYVIIGIIVGDANGGYASMITYMLFYISMNLGTFACIVLFGLRTGTDNIRDYAGLYTKDPFLALSLALCLLSLGGLPPLAGFFGKLHLFWCGWQAGLYFLVSIGLFTSVVSIYYYLKIIKLLMTGRKQEITPHVRNYRRSPLRSNNSIELSMIVCVIASTIPGISMNPIIAIAQDTLF</sequence>
<protein>
    <recommendedName>
        <fullName evidence="1">NAD(P)H-quinone oxidoreductase subunit 2 B, chloroplastic</fullName>
        <ecNumber evidence="1">7.1.1.-</ecNumber>
    </recommendedName>
    <alternativeName>
        <fullName evidence="1">NAD(P)H dehydrogenase, subunit 2 B</fullName>
    </alternativeName>
    <alternativeName>
        <fullName evidence="1">NADH-plastoquinone oxidoreductase subunit 2 B</fullName>
    </alternativeName>
</protein>
<keyword id="KW-0150">Chloroplast</keyword>
<keyword id="KW-0472">Membrane</keyword>
<keyword id="KW-0520">NAD</keyword>
<keyword id="KW-0521">NADP</keyword>
<keyword id="KW-0934">Plastid</keyword>
<keyword id="KW-0618">Plastoquinone</keyword>
<keyword id="KW-0874">Quinone</keyword>
<keyword id="KW-0793">Thylakoid</keyword>
<keyword id="KW-1278">Translocase</keyword>
<keyword id="KW-0812">Transmembrane</keyword>
<keyword id="KW-1133">Transmembrane helix</keyword>
<keyword id="KW-0813">Transport</keyword>
<name>NU2C2_OENGL</name>